<dbReference type="EC" id="4.6.1.18"/>
<dbReference type="PIR" id="A00805">
    <property type="entry name" value="NRWB"/>
</dbReference>
<dbReference type="SMR" id="P00657"/>
<dbReference type="GlyCosmos" id="P00657">
    <property type="glycosylation" value="1 site, No reported glycans"/>
</dbReference>
<dbReference type="GO" id="GO:0005576">
    <property type="term" value="C:extracellular region"/>
    <property type="evidence" value="ECO:0007669"/>
    <property type="project" value="UniProtKB-SubCell"/>
</dbReference>
<dbReference type="GO" id="GO:0016829">
    <property type="term" value="F:lyase activity"/>
    <property type="evidence" value="ECO:0007669"/>
    <property type="project" value="UniProtKB-KW"/>
</dbReference>
<dbReference type="GO" id="GO:0003676">
    <property type="term" value="F:nucleic acid binding"/>
    <property type="evidence" value="ECO:0007669"/>
    <property type="project" value="InterPro"/>
</dbReference>
<dbReference type="GO" id="GO:0004522">
    <property type="term" value="F:ribonuclease A activity"/>
    <property type="evidence" value="ECO:0007669"/>
    <property type="project" value="UniProtKB-EC"/>
</dbReference>
<dbReference type="GO" id="GO:0050830">
    <property type="term" value="P:defense response to Gram-positive bacterium"/>
    <property type="evidence" value="ECO:0007669"/>
    <property type="project" value="TreeGrafter"/>
</dbReference>
<dbReference type="CDD" id="cd06265">
    <property type="entry name" value="RNase_A_canonical"/>
    <property type="match status" value="1"/>
</dbReference>
<dbReference type="FunFam" id="3.10.130.10:FF:000001">
    <property type="entry name" value="Ribonuclease pancreatic"/>
    <property type="match status" value="1"/>
</dbReference>
<dbReference type="Gene3D" id="3.10.130.10">
    <property type="entry name" value="Ribonuclease A-like domain"/>
    <property type="match status" value="1"/>
</dbReference>
<dbReference type="InterPro" id="IPR001427">
    <property type="entry name" value="RNaseA"/>
</dbReference>
<dbReference type="InterPro" id="IPR036816">
    <property type="entry name" value="RNaseA-like_dom_sf"/>
</dbReference>
<dbReference type="InterPro" id="IPR023411">
    <property type="entry name" value="RNaseA_AS"/>
</dbReference>
<dbReference type="InterPro" id="IPR023412">
    <property type="entry name" value="RNaseA_domain"/>
</dbReference>
<dbReference type="PANTHER" id="PTHR11437">
    <property type="entry name" value="RIBONUCLEASE"/>
    <property type="match status" value="1"/>
</dbReference>
<dbReference type="PANTHER" id="PTHR11437:SF24">
    <property type="entry name" value="RIBONUCLEASE PANCREATIC"/>
    <property type="match status" value="1"/>
</dbReference>
<dbReference type="Pfam" id="PF00074">
    <property type="entry name" value="RnaseA"/>
    <property type="match status" value="1"/>
</dbReference>
<dbReference type="PRINTS" id="PR00794">
    <property type="entry name" value="RIBONUCLEASE"/>
</dbReference>
<dbReference type="SMART" id="SM00092">
    <property type="entry name" value="RNAse_Pc"/>
    <property type="match status" value="1"/>
</dbReference>
<dbReference type="SUPFAM" id="SSF54076">
    <property type="entry name" value="RNase A-like"/>
    <property type="match status" value="1"/>
</dbReference>
<dbReference type="PROSITE" id="PS00127">
    <property type="entry name" value="RNASE_PANCREATIC"/>
    <property type="match status" value="1"/>
</dbReference>
<organism>
    <name type="scientific">Bubalus bubalis</name>
    <name type="common">Domestic water buffalo</name>
    <dbReference type="NCBI Taxonomy" id="89462"/>
    <lineage>
        <taxon>Eukaryota</taxon>
        <taxon>Metazoa</taxon>
        <taxon>Chordata</taxon>
        <taxon>Craniata</taxon>
        <taxon>Vertebrata</taxon>
        <taxon>Euteleostomi</taxon>
        <taxon>Mammalia</taxon>
        <taxon>Eutheria</taxon>
        <taxon>Laurasiatheria</taxon>
        <taxon>Artiodactyla</taxon>
        <taxon>Ruminantia</taxon>
        <taxon>Pecora</taxon>
        <taxon>Bovidae</taxon>
        <taxon>Bovinae</taxon>
        <taxon>Bubalus</taxon>
    </lineage>
</organism>
<accession>P00657</accession>
<keyword id="KW-0903">Direct protein sequencing</keyword>
<keyword id="KW-1015">Disulfide bond</keyword>
<keyword id="KW-0255">Endonuclease</keyword>
<keyword id="KW-0325">Glycoprotein</keyword>
<keyword id="KW-0378">Hydrolase</keyword>
<keyword id="KW-0456">Lyase</keyword>
<keyword id="KW-0540">Nuclease</keyword>
<keyword id="KW-0964">Secreted</keyword>
<gene>
    <name type="primary">RNASE1</name>
    <name type="synonym">RNS1</name>
</gene>
<protein>
    <recommendedName>
        <fullName>Ribonuclease pancreatic</fullName>
        <ecNumber>4.6.1.18</ecNumber>
    </recommendedName>
    <alternativeName>
        <fullName>RNase 1</fullName>
    </alternativeName>
    <alternativeName>
        <fullName>RNase A</fullName>
    </alternativeName>
</protein>
<reference key="1">
    <citation type="journal article" date="1979" name="Biochem. Genet.">
        <title>Amino acid sequence differences in pancreatic ribonucleases from water buffalo breeds from Indonesia and Italy.</title>
        <authorList>
            <person name="Sidik A."/>
            <person name="Martena B."/>
            <person name="Beintema J.J."/>
        </authorList>
    </citation>
    <scope>PROTEIN SEQUENCE</scope>
    <source>
        <strain>River breed</strain>
        <strain>Swamp breed</strain>
    </source>
</reference>
<reference key="2">
    <citation type="journal article" date="1980" name="Biochim. Biophys. Acta">
        <title>Primary structures of pancreatic ribonucleases from Bovidae. Impala, Thomson's gazelle, nilgai and water buffalo.</title>
        <authorList>
            <person name="Beintema J.J."/>
        </authorList>
    </citation>
    <scope>PROTEIN SEQUENCE</scope>
    <source>
        <strain>River breed</strain>
        <strain>Swamp breed</strain>
    </source>
</reference>
<proteinExistence type="evidence at protein level"/>
<sequence>KETAAAKFQRQHMDSSTSSASSSNYCNQMMKSRNMTSDRCKPVNTFVHESLADVQAVCSQENVACKNGQTNCYQSYSTMSITDCRETGSSKYPNCAYKTTQANKHIIVACEGNPYVPVHYDASV</sequence>
<feature type="chain" id="PRO_0000057183" description="Ribonuclease pancreatic">
    <location>
        <begin position="1"/>
        <end position="124"/>
    </location>
</feature>
<feature type="region of interest" description="Disordered" evidence="2">
    <location>
        <begin position="1"/>
        <end position="24"/>
    </location>
</feature>
<feature type="active site" description="Proton acceptor" evidence="1">
    <location>
        <position position="12"/>
    </location>
</feature>
<feature type="active site" description="Proton donor" evidence="1">
    <location>
        <position position="119"/>
    </location>
</feature>
<feature type="binding site" evidence="1">
    <location>
        <position position="7"/>
    </location>
    <ligand>
        <name>substrate</name>
    </ligand>
</feature>
<feature type="binding site" evidence="1">
    <location>
        <position position="10"/>
    </location>
    <ligand>
        <name>substrate</name>
    </ligand>
</feature>
<feature type="binding site" evidence="1">
    <location>
        <begin position="41"/>
        <end position="45"/>
    </location>
    <ligand>
        <name>substrate</name>
    </ligand>
</feature>
<feature type="binding site" evidence="1">
    <location>
        <position position="66"/>
    </location>
    <ligand>
        <name>substrate</name>
    </ligand>
</feature>
<feature type="binding site" evidence="1">
    <location>
        <position position="85"/>
    </location>
    <ligand>
        <name>substrate</name>
    </ligand>
</feature>
<feature type="glycosylation site" description="N-linked (GlcNAc...) asparagine; in river-breed only">
    <location>
        <position position="34"/>
    </location>
</feature>
<feature type="disulfide bond" evidence="1">
    <location>
        <begin position="26"/>
        <end position="84"/>
    </location>
</feature>
<feature type="disulfide bond" evidence="1">
    <location>
        <begin position="40"/>
        <end position="95"/>
    </location>
</feature>
<feature type="disulfide bond" evidence="1">
    <location>
        <begin position="58"/>
        <end position="110"/>
    </location>
</feature>
<feature type="disulfide bond" evidence="1">
    <location>
        <begin position="65"/>
        <end position="72"/>
    </location>
</feature>
<feature type="sequence variant" description="In strain: swamp breed.">
    <original>N</original>
    <variation>S</variation>
    <location>
        <position position="34"/>
    </location>
</feature>
<feature type="sequence variant" description="In strain: swamp breed.">
    <original>E</original>
    <variation>K</variation>
    <location>
        <position position="61"/>
    </location>
</feature>
<feature type="sequence variant" description="In strain: swamp breed.">
    <original>Y</original>
    <variation>F</variation>
    <location>
        <position position="120"/>
    </location>
</feature>
<name>RNAS1_BUBBU</name>
<comment type="function">
    <text evidence="1">Endonuclease that catalyzes the cleavage of RNA on the 3' side of pyrimidine nucleotides. Acts on single-stranded and double-stranded RNA (By similarity).</text>
</comment>
<comment type="catalytic activity">
    <reaction>
        <text>an [RNA] containing cytidine + H2O = an [RNA]-3'-cytidine-3'-phosphate + a 5'-hydroxy-ribonucleotide-3'-[RNA].</text>
        <dbReference type="EC" id="4.6.1.18"/>
    </reaction>
</comment>
<comment type="catalytic activity">
    <reaction>
        <text>an [RNA] containing uridine + H2O = an [RNA]-3'-uridine-3'-phosphate + a 5'-hydroxy-ribonucleotide-3'-[RNA].</text>
        <dbReference type="EC" id="4.6.1.18"/>
    </reaction>
</comment>
<comment type="subunit">
    <text evidence="1">Monomer. Interacts with and forms tight 1:1 complexes with RNH1. Dimerization of two such complexes may occur. Interaction with RNH1 inhibits this protein (By similarity).</text>
</comment>
<comment type="subcellular location">
    <subcellularLocation>
        <location>Secreted</location>
    </subcellularLocation>
</comment>
<comment type="tissue specificity">
    <text>Pancreas.</text>
</comment>
<comment type="PTM">
    <text>Swamp breed ribonuclease do not bind carbohydrate, but there is evidence of a polymorphic form that does.</text>
</comment>
<comment type="miscellaneous">
    <text>The sequence of the river breed (Italy) is shown, the other type is known as swamp-type (Indonesia).</text>
</comment>
<comment type="similarity">
    <text evidence="3">Belongs to the pancreatic ribonuclease family.</text>
</comment>
<evidence type="ECO:0000250" key="1"/>
<evidence type="ECO:0000256" key="2">
    <source>
        <dbReference type="SAM" id="MobiDB-lite"/>
    </source>
</evidence>
<evidence type="ECO:0000305" key="3"/>